<protein>
    <recommendedName>
        <fullName evidence="1">Small ribosomal subunit protein uS3</fullName>
    </recommendedName>
    <alternativeName>
        <fullName evidence="3">30S ribosomal protein S3</fullName>
    </alternativeName>
</protein>
<keyword id="KW-1185">Reference proteome</keyword>
<keyword id="KW-0687">Ribonucleoprotein</keyword>
<keyword id="KW-0689">Ribosomal protein</keyword>
<keyword id="KW-0694">RNA-binding</keyword>
<keyword id="KW-0699">rRNA-binding</keyword>
<comment type="function">
    <text evidence="1">Binds the lower part of the 30S subunit head. Binds mRNA in the 70S ribosome, positioning it for translation.</text>
</comment>
<comment type="subunit">
    <text evidence="1">Part of the 30S ribosomal subunit. Forms a tight complex with proteins S10 and S14.</text>
</comment>
<comment type="similarity">
    <text evidence="1">Belongs to the universal ribosomal protein uS3 family.</text>
</comment>
<dbReference type="EMBL" id="CP000449">
    <property type="protein sequence ID" value="ABI66081.1"/>
    <property type="molecule type" value="Genomic_DNA"/>
</dbReference>
<dbReference type="RefSeq" id="WP_011643727.1">
    <property type="nucleotide sequence ID" value="NC_008347.1"/>
</dbReference>
<dbReference type="SMR" id="Q0ANQ6"/>
<dbReference type="STRING" id="394221.Mmar10_1789"/>
<dbReference type="KEGG" id="mmr:Mmar10_1789"/>
<dbReference type="eggNOG" id="COG0092">
    <property type="taxonomic scope" value="Bacteria"/>
</dbReference>
<dbReference type="HOGENOM" id="CLU_058591_0_2_5"/>
<dbReference type="OrthoDB" id="9806396at2"/>
<dbReference type="Proteomes" id="UP000001964">
    <property type="component" value="Chromosome"/>
</dbReference>
<dbReference type="GO" id="GO:0022627">
    <property type="term" value="C:cytosolic small ribosomal subunit"/>
    <property type="evidence" value="ECO:0007669"/>
    <property type="project" value="TreeGrafter"/>
</dbReference>
<dbReference type="GO" id="GO:0003729">
    <property type="term" value="F:mRNA binding"/>
    <property type="evidence" value="ECO:0007669"/>
    <property type="project" value="UniProtKB-UniRule"/>
</dbReference>
<dbReference type="GO" id="GO:0019843">
    <property type="term" value="F:rRNA binding"/>
    <property type="evidence" value="ECO:0007669"/>
    <property type="project" value="UniProtKB-UniRule"/>
</dbReference>
<dbReference type="GO" id="GO:0003735">
    <property type="term" value="F:structural constituent of ribosome"/>
    <property type="evidence" value="ECO:0007669"/>
    <property type="project" value="InterPro"/>
</dbReference>
<dbReference type="GO" id="GO:0006412">
    <property type="term" value="P:translation"/>
    <property type="evidence" value="ECO:0007669"/>
    <property type="project" value="UniProtKB-UniRule"/>
</dbReference>
<dbReference type="CDD" id="cd02412">
    <property type="entry name" value="KH-II_30S_S3"/>
    <property type="match status" value="1"/>
</dbReference>
<dbReference type="FunFam" id="3.30.1140.32:FF:000002">
    <property type="entry name" value="30S ribosomal protein S3"/>
    <property type="match status" value="1"/>
</dbReference>
<dbReference type="FunFam" id="3.30.300.20:FF:000001">
    <property type="entry name" value="30S ribosomal protein S3"/>
    <property type="match status" value="1"/>
</dbReference>
<dbReference type="Gene3D" id="3.30.300.20">
    <property type="match status" value="1"/>
</dbReference>
<dbReference type="Gene3D" id="3.30.1140.32">
    <property type="entry name" value="Ribosomal protein S3, C-terminal domain"/>
    <property type="match status" value="1"/>
</dbReference>
<dbReference type="HAMAP" id="MF_01309_B">
    <property type="entry name" value="Ribosomal_uS3_B"/>
    <property type="match status" value="1"/>
</dbReference>
<dbReference type="InterPro" id="IPR004087">
    <property type="entry name" value="KH_dom"/>
</dbReference>
<dbReference type="InterPro" id="IPR015946">
    <property type="entry name" value="KH_dom-like_a/b"/>
</dbReference>
<dbReference type="InterPro" id="IPR004044">
    <property type="entry name" value="KH_dom_type_2"/>
</dbReference>
<dbReference type="InterPro" id="IPR009019">
    <property type="entry name" value="KH_sf_prok-type"/>
</dbReference>
<dbReference type="InterPro" id="IPR036419">
    <property type="entry name" value="Ribosomal_S3_C_sf"/>
</dbReference>
<dbReference type="InterPro" id="IPR005704">
    <property type="entry name" value="Ribosomal_uS3_bac-typ"/>
</dbReference>
<dbReference type="InterPro" id="IPR001351">
    <property type="entry name" value="Ribosomal_uS3_C"/>
</dbReference>
<dbReference type="InterPro" id="IPR018280">
    <property type="entry name" value="Ribosomal_uS3_CS"/>
</dbReference>
<dbReference type="NCBIfam" id="TIGR01009">
    <property type="entry name" value="rpsC_bact"/>
    <property type="match status" value="1"/>
</dbReference>
<dbReference type="PANTHER" id="PTHR11760">
    <property type="entry name" value="30S/40S RIBOSOMAL PROTEIN S3"/>
    <property type="match status" value="1"/>
</dbReference>
<dbReference type="PANTHER" id="PTHR11760:SF19">
    <property type="entry name" value="SMALL RIBOSOMAL SUBUNIT PROTEIN US3C"/>
    <property type="match status" value="1"/>
</dbReference>
<dbReference type="Pfam" id="PF07650">
    <property type="entry name" value="KH_2"/>
    <property type="match status" value="1"/>
</dbReference>
<dbReference type="Pfam" id="PF00189">
    <property type="entry name" value="Ribosomal_S3_C"/>
    <property type="match status" value="1"/>
</dbReference>
<dbReference type="SMART" id="SM00322">
    <property type="entry name" value="KH"/>
    <property type="match status" value="1"/>
</dbReference>
<dbReference type="SUPFAM" id="SSF54814">
    <property type="entry name" value="Prokaryotic type KH domain (KH-domain type II)"/>
    <property type="match status" value="1"/>
</dbReference>
<dbReference type="SUPFAM" id="SSF54821">
    <property type="entry name" value="Ribosomal protein S3 C-terminal domain"/>
    <property type="match status" value="1"/>
</dbReference>
<dbReference type="PROSITE" id="PS50823">
    <property type="entry name" value="KH_TYPE_2"/>
    <property type="match status" value="1"/>
</dbReference>
<dbReference type="PROSITE" id="PS00548">
    <property type="entry name" value="RIBOSOMAL_S3"/>
    <property type="match status" value="1"/>
</dbReference>
<organism>
    <name type="scientific">Maricaulis maris (strain MCS10)</name>
    <name type="common">Caulobacter maris</name>
    <dbReference type="NCBI Taxonomy" id="394221"/>
    <lineage>
        <taxon>Bacteria</taxon>
        <taxon>Pseudomonadati</taxon>
        <taxon>Pseudomonadota</taxon>
        <taxon>Alphaproteobacteria</taxon>
        <taxon>Maricaulales</taxon>
        <taxon>Maricaulaceae</taxon>
        <taxon>Maricaulis</taxon>
    </lineage>
</organism>
<sequence>MGQKVNPIGLRLGVNRTWESRWYAGAGEYAKLLHEDIKIRKMLKERLKNASVSKIVIERPHKKCRVTVHTARPGVVIGKKGSDIETLRKELSKMIDGEVHLNLVEVRKPEIDAALVAESIAQQLERRVAFRRAMKRSMQSAMRMGAKGCKIVCGGRLGGAEIARTEQYNEGSVPLHTLRADIDYGTCEAKTAMGIIGIKVWIYKGEIMEHDPNAQERRLQESGEQRARSGRQAA</sequence>
<evidence type="ECO:0000255" key="1">
    <source>
        <dbReference type="HAMAP-Rule" id="MF_01309"/>
    </source>
</evidence>
<evidence type="ECO:0000256" key="2">
    <source>
        <dbReference type="SAM" id="MobiDB-lite"/>
    </source>
</evidence>
<evidence type="ECO:0000305" key="3"/>
<reference key="1">
    <citation type="submission" date="2006-08" db="EMBL/GenBank/DDBJ databases">
        <title>Complete sequence of Maricaulis maris MCS10.</title>
        <authorList>
            <consortium name="US DOE Joint Genome Institute"/>
            <person name="Copeland A."/>
            <person name="Lucas S."/>
            <person name="Lapidus A."/>
            <person name="Barry K."/>
            <person name="Detter J.C."/>
            <person name="Glavina del Rio T."/>
            <person name="Hammon N."/>
            <person name="Israni S."/>
            <person name="Dalin E."/>
            <person name="Tice H."/>
            <person name="Pitluck S."/>
            <person name="Saunders E."/>
            <person name="Brettin T."/>
            <person name="Bruce D."/>
            <person name="Han C."/>
            <person name="Tapia R."/>
            <person name="Gilna P."/>
            <person name="Schmutz J."/>
            <person name="Larimer F."/>
            <person name="Land M."/>
            <person name="Hauser L."/>
            <person name="Kyrpides N."/>
            <person name="Mikhailova N."/>
            <person name="Viollier P."/>
            <person name="Stephens C."/>
            <person name="Richardson P."/>
        </authorList>
    </citation>
    <scope>NUCLEOTIDE SEQUENCE [LARGE SCALE GENOMIC DNA]</scope>
    <source>
        <strain>MCS10</strain>
    </source>
</reference>
<proteinExistence type="inferred from homology"/>
<name>RS3_MARMM</name>
<accession>Q0ANQ6</accession>
<feature type="chain" id="PRO_0000293821" description="Small ribosomal subunit protein uS3">
    <location>
        <begin position="1"/>
        <end position="234"/>
    </location>
</feature>
<feature type="domain" description="KH type-2" evidence="1">
    <location>
        <begin position="39"/>
        <end position="107"/>
    </location>
</feature>
<feature type="region of interest" description="Disordered" evidence="2">
    <location>
        <begin position="215"/>
        <end position="234"/>
    </location>
</feature>
<feature type="compositionally biased region" description="Basic and acidic residues" evidence="2">
    <location>
        <begin position="215"/>
        <end position="227"/>
    </location>
</feature>
<gene>
    <name evidence="1" type="primary">rpsC</name>
    <name type="ordered locus">Mmar10_1789</name>
</gene>